<name>RS13_VIBVY</name>
<organism>
    <name type="scientific">Vibrio vulnificus (strain YJ016)</name>
    <dbReference type="NCBI Taxonomy" id="196600"/>
    <lineage>
        <taxon>Bacteria</taxon>
        <taxon>Pseudomonadati</taxon>
        <taxon>Pseudomonadota</taxon>
        <taxon>Gammaproteobacteria</taxon>
        <taxon>Vibrionales</taxon>
        <taxon>Vibrionaceae</taxon>
        <taxon>Vibrio</taxon>
    </lineage>
</organism>
<sequence>MARIAGINIPDQKHAVIALTAIYGIGKTRSKAILADVGIAEDVKISELTEEQIDQLRDGVAKYTVEGDLRREVSMNIKRLMDLGCYRGLRHRRSLPLRGQRTKTNARTRKGPRKPIKK</sequence>
<feature type="chain" id="PRO_0000132169" description="Small ribosomal subunit protein uS13">
    <location>
        <begin position="1"/>
        <end position="118"/>
    </location>
</feature>
<feature type="region of interest" description="Disordered" evidence="2">
    <location>
        <begin position="94"/>
        <end position="118"/>
    </location>
</feature>
<accession>Q7MPG7</accession>
<dbReference type="EMBL" id="BA000037">
    <property type="protein sequence ID" value="BAC93160.1"/>
    <property type="molecule type" value="Genomic_DNA"/>
</dbReference>
<dbReference type="RefSeq" id="WP_011078812.1">
    <property type="nucleotide sequence ID" value="NC_005139.1"/>
</dbReference>
<dbReference type="SMR" id="Q7MPG7"/>
<dbReference type="STRING" id="672.VV93_v1c03680"/>
<dbReference type="GeneID" id="93895044"/>
<dbReference type="KEGG" id="vvy:VV0396"/>
<dbReference type="eggNOG" id="COG0099">
    <property type="taxonomic scope" value="Bacteria"/>
</dbReference>
<dbReference type="HOGENOM" id="CLU_103849_1_2_6"/>
<dbReference type="Proteomes" id="UP000002675">
    <property type="component" value="Chromosome I"/>
</dbReference>
<dbReference type="GO" id="GO:0005829">
    <property type="term" value="C:cytosol"/>
    <property type="evidence" value="ECO:0007669"/>
    <property type="project" value="TreeGrafter"/>
</dbReference>
<dbReference type="GO" id="GO:0015935">
    <property type="term" value="C:small ribosomal subunit"/>
    <property type="evidence" value="ECO:0007669"/>
    <property type="project" value="TreeGrafter"/>
</dbReference>
<dbReference type="GO" id="GO:0019843">
    <property type="term" value="F:rRNA binding"/>
    <property type="evidence" value="ECO:0007669"/>
    <property type="project" value="UniProtKB-UniRule"/>
</dbReference>
<dbReference type="GO" id="GO:0003735">
    <property type="term" value="F:structural constituent of ribosome"/>
    <property type="evidence" value="ECO:0007669"/>
    <property type="project" value="InterPro"/>
</dbReference>
<dbReference type="GO" id="GO:0000049">
    <property type="term" value="F:tRNA binding"/>
    <property type="evidence" value="ECO:0007669"/>
    <property type="project" value="UniProtKB-UniRule"/>
</dbReference>
<dbReference type="GO" id="GO:0006412">
    <property type="term" value="P:translation"/>
    <property type="evidence" value="ECO:0007669"/>
    <property type="project" value="UniProtKB-UniRule"/>
</dbReference>
<dbReference type="FunFam" id="1.10.8.50:FF:000001">
    <property type="entry name" value="30S ribosomal protein S13"/>
    <property type="match status" value="1"/>
</dbReference>
<dbReference type="FunFam" id="4.10.910.10:FF:000001">
    <property type="entry name" value="30S ribosomal protein S13"/>
    <property type="match status" value="1"/>
</dbReference>
<dbReference type="Gene3D" id="1.10.8.50">
    <property type="match status" value="1"/>
</dbReference>
<dbReference type="Gene3D" id="4.10.910.10">
    <property type="entry name" value="30s ribosomal protein s13, domain 2"/>
    <property type="match status" value="1"/>
</dbReference>
<dbReference type="HAMAP" id="MF_01315">
    <property type="entry name" value="Ribosomal_uS13"/>
    <property type="match status" value="1"/>
</dbReference>
<dbReference type="InterPro" id="IPR027437">
    <property type="entry name" value="Rbsml_uS13_C"/>
</dbReference>
<dbReference type="InterPro" id="IPR001892">
    <property type="entry name" value="Ribosomal_uS13"/>
</dbReference>
<dbReference type="InterPro" id="IPR010979">
    <property type="entry name" value="Ribosomal_uS13-like_H2TH"/>
</dbReference>
<dbReference type="InterPro" id="IPR019980">
    <property type="entry name" value="Ribosomal_uS13_bac-type"/>
</dbReference>
<dbReference type="InterPro" id="IPR018269">
    <property type="entry name" value="Ribosomal_uS13_CS"/>
</dbReference>
<dbReference type="NCBIfam" id="TIGR03631">
    <property type="entry name" value="uS13_bact"/>
    <property type="match status" value="1"/>
</dbReference>
<dbReference type="PANTHER" id="PTHR10871">
    <property type="entry name" value="30S RIBOSOMAL PROTEIN S13/40S RIBOSOMAL PROTEIN S18"/>
    <property type="match status" value="1"/>
</dbReference>
<dbReference type="PANTHER" id="PTHR10871:SF1">
    <property type="entry name" value="SMALL RIBOSOMAL SUBUNIT PROTEIN US13M"/>
    <property type="match status" value="1"/>
</dbReference>
<dbReference type="Pfam" id="PF00416">
    <property type="entry name" value="Ribosomal_S13"/>
    <property type="match status" value="1"/>
</dbReference>
<dbReference type="PIRSF" id="PIRSF002134">
    <property type="entry name" value="Ribosomal_S13"/>
    <property type="match status" value="1"/>
</dbReference>
<dbReference type="SUPFAM" id="SSF46946">
    <property type="entry name" value="S13-like H2TH domain"/>
    <property type="match status" value="1"/>
</dbReference>
<dbReference type="PROSITE" id="PS00646">
    <property type="entry name" value="RIBOSOMAL_S13_1"/>
    <property type="match status" value="1"/>
</dbReference>
<dbReference type="PROSITE" id="PS50159">
    <property type="entry name" value="RIBOSOMAL_S13_2"/>
    <property type="match status" value="1"/>
</dbReference>
<gene>
    <name evidence="1" type="primary">rpsM</name>
    <name type="ordered locus">VV0396</name>
</gene>
<protein>
    <recommendedName>
        <fullName evidence="1">Small ribosomal subunit protein uS13</fullName>
    </recommendedName>
    <alternativeName>
        <fullName evidence="3">30S ribosomal protein S13</fullName>
    </alternativeName>
</protein>
<evidence type="ECO:0000255" key="1">
    <source>
        <dbReference type="HAMAP-Rule" id="MF_01315"/>
    </source>
</evidence>
<evidence type="ECO:0000256" key="2">
    <source>
        <dbReference type="SAM" id="MobiDB-lite"/>
    </source>
</evidence>
<evidence type="ECO:0000305" key="3"/>
<keyword id="KW-0687">Ribonucleoprotein</keyword>
<keyword id="KW-0689">Ribosomal protein</keyword>
<keyword id="KW-0694">RNA-binding</keyword>
<keyword id="KW-0699">rRNA-binding</keyword>
<keyword id="KW-0820">tRNA-binding</keyword>
<reference key="1">
    <citation type="journal article" date="2003" name="Genome Res.">
        <title>Comparative genome analysis of Vibrio vulnificus, a marine pathogen.</title>
        <authorList>
            <person name="Chen C.-Y."/>
            <person name="Wu K.-M."/>
            <person name="Chang Y.-C."/>
            <person name="Chang C.-H."/>
            <person name="Tsai H.-C."/>
            <person name="Liao T.-L."/>
            <person name="Liu Y.-M."/>
            <person name="Chen H.-J."/>
            <person name="Shen A.B.-T."/>
            <person name="Li J.-C."/>
            <person name="Su T.-L."/>
            <person name="Shao C.-P."/>
            <person name="Lee C.-T."/>
            <person name="Hor L.-I."/>
            <person name="Tsai S.-F."/>
        </authorList>
    </citation>
    <scope>NUCLEOTIDE SEQUENCE [LARGE SCALE GENOMIC DNA]</scope>
    <source>
        <strain>YJ016</strain>
    </source>
</reference>
<proteinExistence type="inferred from homology"/>
<comment type="function">
    <text evidence="1">Located at the top of the head of the 30S subunit, it contacts several helices of the 16S rRNA. In the 70S ribosome it contacts the 23S rRNA (bridge B1a) and protein L5 of the 50S subunit (bridge B1b), connecting the 2 subunits; these bridges are implicated in subunit movement. Contacts the tRNAs in the A and P-sites.</text>
</comment>
<comment type="subunit">
    <text evidence="1">Part of the 30S ribosomal subunit. Forms a loose heterodimer with protein S19. Forms two bridges to the 50S subunit in the 70S ribosome.</text>
</comment>
<comment type="similarity">
    <text evidence="1">Belongs to the universal ribosomal protein uS13 family.</text>
</comment>